<organism>
    <name type="scientific">Staphylococcus aureus (strain Mu3 / ATCC 700698)</name>
    <dbReference type="NCBI Taxonomy" id="418127"/>
    <lineage>
        <taxon>Bacteria</taxon>
        <taxon>Bacillati</taxon>
        <taxon>Bacillota</taxon>
        <taxon>Bacilli</taxon>
        <taxon>Bacillales</taxon>
        <taxon>Staphylococcaceae</taxon>
        <taxon>Staphylococcus</taxon>
    </lineage>
</organism>
<feature type="chain" id="PRO_0000339747" description="Xanthine phosphoribosyltransferase">
    <location>
        <begin position="1"/>
        <end position="192"/>
    </location>
</feature>
<feature type="binding site" evidence="1">
    <location>
        <position position="20"/>
    </location>
    <ligand>
        <name>xanthine</name>
        <dbReference type="ChEBI" id="CHEBI:17712"/>
    </ligand>
</feature>
<feature type="binding site" evidence="1">
    <location>
        <position position="27"/>
    </location>
    <ligand>
        <name>xanthine</name>
        <dbReference type="ChEBI" id="CHEBI:17712"/>
    </ligand>
</feature>
<feature type="binding site" evidence="1">
    <location>
        <begin position="128"/>
        <end position="132"/>
    </location>
    <ligand>
        <name>5-phospho-alpha-D-ribose 1-diphosphate</name>
        <dbReference type="ChEBI" id="CHEBI:58017"/>
    </ligand>
</feature>
<feature type="binding site" evidence="1">
    <location>
        <position position="156"/>
    </location>
    <ligand>
        <name>xanthine</name>
        <dbReference type="ChEBI" id="CHEBI:17712"/>
    </ligand>
</feature>
<reference key="1">
    <citation type="journal article" date="2008" name="Antimicrob. Agents Chemother.">
        <title>Mutated response regulator graR is responsible for phenotypic conversion of Staphylococcus aureus from heterogeneous vancomycin-intermediate resistance to vancomycin-intermediate resistance.</title>
        <authorList>
            <person name="Neoh H.-M."/>
            <person name="Cui L."/>
            <person name="Yuzawa H."/>
            <person name="Takeuchi F."/>
            <person name="Matsuo M."/>
            <person name="Hiramatsu K."/>
        </authorList>
    </citation>
    <scope>NUCLEOTIDE SEQUENCE [LARGE SCALE GENOMIC DNA]</scope>
    <source>
        <strain>Mu3 / ATCC 700698</strain>
    </source>
</reference>
<evidence type="ECO:0000255" key="1">
    <source>
        <dbReference type="HAMAP-Rule" id="MF_01184"/>
    </source>
</evidence>
<proteinExistence type="inferred from homology"/>
<accession>A7WY89</accession>
<sequence length="192" mass="20884">MELLGQKVKEDGVVIDEKILKVDGFLNHQIDAKLMNEVGRTFYEQFKDKGITKILTIEASGIAPAIMAALHFDVPCLFAKKAKPSTLTDGYYETSIHSFTKNKTSTVIVSKEFLSEEDTVLIIDDFLANGDASLGLYDIAQQANAKTAGIGIVVEKSFQNGHQRLEEAGLTVSSLCKVASLEGNKVTLVGEE</sequence>
<dbReference type="EC" id="2.4.2.22" evidence="1"/>
<dbReference type="EMBL" id="AP009324">
    <property type="protein sequence ID" value="BAF77268.1"/>
    <property type="molecule type" value="Genomic_DNA"/>
</dbReference>
<dbReference type="RefSeq" id="WP_000421410.1">
    <property type="nucleotide sequence ID" value="NZ_CTYB01000007.1"/>
</dbReference>
<dbReference type="SMR" id="A7WY89"/>
<dbReference type="GeneID" id="66838694"/>
<dbReference type="KEGG" id="saw:SAHV_0385"/>
<dbReference type="HOGENOM" id="CLU_099015_0_0_9"/>
<dbReference type="UniPathway" id="UPA00602">
    <property type="reaction ID" value="UER00658"/>
</dbReference>
<dbReference type="GO" id="GO:0005737">
    <property type="term" value="C:cytoplasm"/>
    <property type="evidence" value="ECO:0007669"/>
    <property type="project" value="UniProtKB-SubCell"/>
</dbReference>
<dbReference type="GO" id="GO:0000310">
    <property type="term" value="F:xanthine phosphoribosyltransferase activity"/>
    <property type="evidence" value="ECO:0007669"/>
    <property type="project" value="UniProtKB-UniRule"/>
</dbReference>
<dbReference type="GO" id="GO:0006166">
    <property type="term" value="P:purine ribonucleoside salvage"/>
    <property type="evidence" value="ECO:0007669"/>
    <property type="project" value="UniProtKB-KW"/>
</dbReference>
<dbReference type="GO" id="GO:0046110">
    <property type="term" value="P:xanthine metabolic process"/>
    <property type="evidence" value="ECO:0007669"/>
    <property type="project" value="InterPro"/>
</dbReference>
<dbReference type="GO" id="GO:0032265">
    <property type="term" value="P:XMP salvage"/>
    <property type="evidence" value="ECO:0007669"/>
    <property type="project" value="UniProtKB-UniRule"/>
</dbReference>
<dbReference type="CDD" id="cd06223">
    <property type="entry name" value="PRTases_typeI"/>
    <property type="match status" value="1"/>
</dbReference>
<dbReference type="Gene3D" id="3.40.50.2020">
    <property type="match status" value="1"/>
</dbReference>
<dbReference type="HAMAP" id="MF_01184">
    <property type="entry name" value="XPRTase"/>
    <property type="match status" value="1"/>
</dbReference>
<dbReference type="InterPro" id="IPR000836">
    <property type="entry name" value="PRibTrfase_dom"/>
</dbReference>
<dbReference type="InterPro" id="IPR029057">
    <property type="entry name" value="PRTase-like"/>
</dbReference>
<dbReference type="InterPro" id="IPR050118">
    <property type="entry name" value="Pur/Pyrimidine_PRTase"/>
</dbReference>
<dbReference type="InterPro" id="IPR010079">
    <property type="entry name" value="Xanthine_PRibTrfase"/>
</dbReference>
<dbReference type="NCBIfam" id="NF006671">
    <property type="entry name" value="PRK09219.1"/>
    <property type="match status" value="1"/>
</dbReference>
<dbReference type="NCBIfam" id="TIGR01744">
    <property type="entry name" value="XPRTase"/>
    <property type="match status" value="1"/>
</dbReference>
<dbReference type="PANTHER" id="PTHR43864">
    <property type="entry name" value="HYPOXANTHINE/GUANINE PHOSPHORIBOSYLTRANSFERASE"/>
    <property type="match status" value="1"/>
</dbReference>
<dbReference type="PANTHER" id="PTHR43864:SF1">
    <property type="entry name" value="XANTHINE PHOSPHORIBOSYLTRANSFERASE"/>
    <property type="match status" value="1"/>
</dbReference>
<dbReference type="SUPFAM" id="SSF53271">
    <property type="entry name" value="PRTase-like"/>
    <property type="match status" value="1"/>
</dbReference>
<comment type="function">
    <text evidence="1">Converts the preformed base xanthine, a product of nucleic acid breakdown, to xanthosine 5'-monophosphate (XMP), so it can be reused for RNA or DNA synthesis.</text>
</comment>
<comment type="catalytic activity">
    <reaction evidence="1">
        <text>XMP + diphosphate = xanthine + 5-phospho-alpha-D-ribose 1-diphosphate</text>
        <dbReference type="Rhea" id="RHEA:10800"/>
        <dbReference type="ChEBI" id="CHEBI:17712"/>
        <dbReference type="ChEBI" id="CHEBI:33019"/>
        <dbReference type="ChEBI" id="CHEBI:57464"/>
        <dbReference type="ChEBI" id="CHEBI:58017"/>
        <dbReference type="EC" id="2.4.2.22"/>
    </reaction>
</comment>
<comment type="pathway">
    <text evidence="1">Purine metabolism; XMP biosynthesis via salvage pathway; XMP from xanthine: step 1/1.</text>
</comment>
<comment type="subunit">
    <text evidence="1">Homodimer.</text>
</comment>
<comment type="subcellular location">
    <subcellularLocation>
        <location evidence="1">Cytoplasm</location>
    </subcellularLocation>
</comment>
<comment type="similarity">
    <text evidence="1">Belongs to the purine/pyrimidine phosphoribosyltransferase family. Xpt subfamily.</text>
</comment>
<gene>
    <name evidence="1" type="primary">xpt</name>
    <name type="ordered locus">SAHV_0385</name>
</gene>
<protein>
    <recommendedName>
        <fullName evidence="1">Xanthine phosphoribosyltransferase</fullName>
        <shortName evidence="1">XPRTase</shortName>
        <ecNumber evidence="1">2.4.2.22</ecNumber>
    </recommendedName>
</protein>
<keyword id="KW-0963">Cytoplasm</keyword>
<keyword id="KW-0328">Glycosyltransferase</keyword>
<keyword id="KW-0660">Purine salvage</keyword>
<keyword id="KW-0808">Transferase</keyword>
<name>XPT_STAA1</name>